<name>LAC3_MOUSE</name>
<proteinExistence type="evidence at protein level"/>
<keyword id="KW-0903">Direct protein sequencing</keyword>
<keyword id="KW-1015">Disulfide bond</keyword>
<keyword id="KW-0393">Immunoglobulin domain</keyword>
<keyword id="KW-1185">Reference proteome</keyword>
<protein>
    <recommendedName>
        <fullName>Ig lambda-3 chain C region</fullName>
    </recommendedName>
</protein>
<accession>P01845</accession>
<reference key="1">
    <citation type="journal article" date="1982" name="Proc. Natl. Acad. Sci. U.S.A.">
        <title>Evolution of mouse immunoglobulin lambda genes.</title>
        <authorList>
            <person name="Selsing E."/>
            <person name="Miller J."/>
            <person name="Wilson R."/>
            <person name="Storb U."/>
        </authorList>
    </citation>
    <scope>NUCLEOTIDE SEQUENCE [GENOMIC DNA]</scope>
</reference>
<reference key="2">
    <citation type="journal article" date="1981" name="ICN UCLA Symp. Mol. Cell. Biol.">
        <title>The variable region of mouse lambda-3 chains.</title>
        <authorList>
            <person name="Breyer R.M."/>
            <person name="Sauer R.T."/>
            <person name="Eisen H.N."/>
        </authorList>
    </citation>
    <scope>PROTEIN SEQUENCE OF 1-18 (MYELOMA PROTEIN CBPC-49)</scope>
</reference>
<reference key="3">
    <citation type="journal article" date="1981" name="Proc. Natl. Acad. Sci. U.S.A.">
        <title>Identification of a third type of lambda light chain in mouse immunoglobulins.</title>
        <authorList>
            <person name="Azuma T."/>
            <person name="Steiner L.A."/>
            <person name="Eisen H.N."/>
        </authorList>
    </citation>
    <scope>PROTEIN SEQUENCE OF 10-104 (MYELOMA PROTEIN CBPC-49 AND MONOCLONAL ANTIBODY 8-47)</scope>
</reference>
<organism>
    <name type="scientific">Mus musculus</name>
    <name type="common">Mouse</name>
    <dbReference type="NCBI Taxonomy" id="10090"/>
    <lineage>
        <taxon>Eukaryota</taxon>
        <taxon>Metazoa</taxon>
        <taxon>Chordata</taxon>
        <taxon>Craniata</taxon>
        <taxon>Vertebrata</taxon>
        <taxon>Euteleostomi</taxon>
        <taxon>Mammalia</taxon>
        <taxon>Eutheria</taxon>
        <taxon>Euarchontoglires</taxon>
        <taxon>Glires</taxon>
        <taxon>Rodentia</taxon>
        <taxon>Myomorpha</taxon>
        <taxon>Muroidea</taxon>
        <taxon>Muridae</taxon>
        <taxon>Murinae</taxon>
        <taxon>Mus</taxon>
        <taxon>Mus</taxon>
    </lineage>
</organism>
<sequence>QPKSTPTLTMFPPSPEELQENKATLVCLISNFSPSGVTVAWKANGTPITQGVDTSNPTKEDNKYMASSFLHLTSDQWRSHNSFTCQVTHEGDTVEKSLSPAECL</sequence>
<feature type="chain" id="PRO_0000153610" description="Ig lambda-3 chain C region">
    <location>
        <begin position="1" status="less than"/>
        <end position="104"/>
    </location>
</feature>
<feature type="domain" description="Ig-like">
    <location>
        <begin position="6"/>
        <end position="99"/>
    </location>
</feature>
<feature type="disulfide bond">
    <location>
        <begin position="27"/>
        <end position="85"/>
    </location>
</feature>
<feature type="disulfide bond" description="Interchain (with heavy chain)">
    <location>
        <position position="103"/>
    </location>
</feature>
<feature type="non-terminal residue">
    <location>
        <position position="1"/>
    </location>
</feature>
<gene>
    <name type="primary">Iglc3</name>
</gene>
<dbReference type="EMBL" id="J00585">
    <property type="protein sequence ID" value="AAB59670.1"/>
    <property type="molecule type" value="Genomic_DNA"/>
</dbReference>
<dbReference type="PIR" id="B93922">
    <property type="entry name" value="L3MS"/>
</dbReference>
<dbReference type="PIR" id="S22762">
    <property type="entry name" value="S22762"/>
</dbReference>
<dbReference type="SMR" id="P01845"/>
<dbReference type="FunCoup" id="P01845">
    <property type="interactions" value="55"/>
</dbReference>
<dbReference type="PeptideAtlas" id="P01845"/>
<dbReference type="ProteomicsDB" id="263693"/>
<dbReference type="AGR" id="MGI:99886"/>
<dbReference type="MGI" id="MGI:99886">
    <property type="gene designation" value="Iglc3"/>
</dbReference>
<dbReference type="InParanoid" id="P01845"/>
<dbReference type="OMA" id="TINSCDW"/>
<dbReference type="PhylomeDB" id="P01845"/>
<dbReference type="Reactome" id="R-MMU-166663">
    <property type="pathway name" value="Initial triggering of complement"/>
</dbReference>
<dbReference type="Reactome" id="R-MMU-173623">
    <property type="pathway name" value="Classical antibody-mediated complement activation"/>
</dbReference>
<dbReference type="Reactome" id="R-MMU-198933">
    <property type="pathway name" value="Immunoregulatory interactions between a Lymphoid and a non-Lymphoid cell"/>
</dbReference>
<dbReference type="Reactome" id="R-MMU-202733">
    <property type="pathway name" value="Cell surface interactions at the vascular wall"/>
</dbReference>
<dbReference type="Reactome" id="R-MMU-2029481">
    <property type="pathway name" value="FCGR activation"/>
</dbReference>
<dbReference type="Reactome" id="R-MMU-2029482">
    <property type="pathway name" value="Regulation of actin dynamics for phagocytic cup formation"/>
</dbReference>
<dbReference type="Reactome" id="R-MMU-2029485">
    <property type="pathway name" value="Role of phospholipids in phagocytosis"/>
</dbReference>
<dbReference type="Reactome" id="R-MMU-2168880">
    <property type="pathway name" value="Scavenging of heme from plasma"/>
</dbReference>
<dbReference type="Reactome" id="R-MMU-2454202">
    <property type="pathway name" value="Fc epsilon receptor (FCERI) signaling"/>
</dbReference>
<dbReference type="Reactome" id="R-MMU-2730905">
    <property type="pathway name" value="Role of LAT2/NTAL/LAB on calcium mobilization"/>
</dbReference>
<dbReference type="Reactome" id="R-MMU-2871796">
    <property type="pathway name" value="FCERI mediated MAPK activation"/>
</dbReference>
<dbReference type="Reactome" id="R-MMU-2871809">
    <property type="pathway name" value="FCERI mediated Ca+2 mobilization"/>
</dbReference>
<dbReference type="Reactome" id="R-MMU-2871837">
    <property type="pathway name" value="FCERI mediated NF-kB activation"/>
</dbReference>
<dbReference type="Reactome" id="R-MMU-5690714">
    <property type="pathway name" value="CD22 mediated BCR regulation"/>
</dbReference>
<dbReference type="Reactome" id="R-MMU-977606">
    <property type="pathway name" value="Regulation of Complement cascade"/>
</dbReference>
<dbReference type="Reactome" id="R-MMU-983695">
    <property type="pathway name" value="Antigen activates B Cell Receptor (BCR) leading to generation of second messengers"/>
</dbReference>
<dbReference type="ChiTaRS" id="Iglc3">
    <property type="organism name" value="mouse"/>
</dbReference>
<dbReference type="PRO" id="PR:P01845"/>
<dbReference type="Proteomes" id="UP000000589">
    <property type="component" value="Unplaced"/>
</dbReference>
<dbReference type="RNAct" id="P01845">
    <property type="molecule type" value="protein"/>
</dbReference>
<dbReference type="GO" id="GO:0005576">
    <property type="term" value="C:extracellular region"/>
    <property type="evidence" value="ECO:0000304"/>
    <property type="project" value="Reactome"/>
</dbReference>
<dbReference type="GO" id="GO:0005886">
    <property type="term" value="C:plasma membrane"/>
    <property type="evidence" value="ECO:0000304"/>
    <property type="project" value="Reactome"/>
</dbReference>
<dbReference type="CDD" id="cd07699">
    <property type="entry name" value="IgC1_L"/>
    <property type="match status" value="1"/>
</dbReference>
<dbReference type="FunFam" id="2.60.40.10:FF:000283">
    <property type="entry name" value="Immunoglobulin kappa constant"/>
    <property type="match status" value="1"/>
</dbReference>
<dbReference type="Gene3D" id="2.60.40.10">
    <property type="entry name" value="Immunoglobulins"/>
    <property type="match status" value="1"/>
</dbReference>
<dbReference type="InterPro" id="IPR007110">
    <property type="entry name" value="Ig-like_dom"/>
</dbReference>
<dbReference type="InterPro" id="IPR036179">
    <property type="entry name" value="Ig-like_dom_sf"/>
</dbReference>
<dbReference type="InterPro" id="IPR013783">
    <property type="entry name" value="Ig-like_fold"/>
</dbReference>
<dbReference type="InterPro" id="IPR003006">
    <property type="entry name" value="Ig/MHC_CS"/>
</dbReference>
<dbReference type="InterPro" id="IPR003597">
    <property type="entry name" value="Ig_C1-set"/>
</dbReference>
<dbReference type="InterPro" id="IPR050160">
    <property type="entry name" value="MHC/Immunoglobulin"/>
</dbReference>
<dbReference type="PANTHER" id="PTHR19944:SF98">
    <property type="entry name" value="IG-LIKE DOMAIN-CONTAINING PROTEIN"/>
    <property type="match status" value="1"/>
</dbReference>
<dbReference type="PANTHER" id="PTHR19944">
    <property type="entry name" value="MHC CLASS II-RELATED"/>
    <property type="match status" value="1"/>
</dbReference>
<dbReference type="Pfam" id="PF07654">
    <property type="entry name" value="C1-set"/>
    <property type="match status" value="1"/>
</dbReference>
<dbReference type="SMART" id="SM00407">
    <property type="entry name" value="IGc1"/>
    <property type="match status" value="1"/>
</dbReference>
<dbReference type="SUPFAM" id="SSF48726">
    <property type="entry name" value="Immunoglobulin"/>
    <property type="match status" value="1"/>
</dbReference>
<dbReference type="PROSITE" id="PS50835">
    <property type="entry name" value="IG_LIKE"/>
    <property type="match status" value="1"/>
</dbReference>
<dbReference type="PROSITE" id="PS00290">
    <property type="entry name" value="IG_MHC"/>
    <property type="match status" value="1"/>
</dbReference>